<evidence type="ECO:0000250" key="1">
    <source>
        <dbReference type="UniProtKB" id="Q96IJ6"/>
    </source>
</evidence>
<evidence type="ECO:0000269" key="2">
    <source>
    </source>
</evidence>
<evidence type="ECO:0000305" key="3"/>
<accession>Q6GMK8</accession>
<comment type="function">
    <text evidence="1 3">Regulatory subunit of the GMPPA-GMPPB mannose-1-phosphate guanylyltransferase complex; reduces the catalytic activity of GMPPB when part of the complex. Mediates allosteric feedback inhibition of GMPPB catalytic activity upon binding GDP-alpha-D-mannose. Together with GMPPB regulates GDP-alpha-D-mannose levels (By similarity). One of two paralogs (gmppaa and gmppab) that may have redundant functions (Probable).</text>
</comment>
<comment type="pathway">
    <text>Nucleotide-sugar biosynthesis; GDP-alpha-D-mannose biosynthesis; GDP-alpha-D-mannose from alpha-D-mannose 1-phosphate (GTP route): step 1/1.</text>
</comment>
<comment type="subunit">
    <text evidence="1">Component of the GMPPA-GMPPB mannose-1-phosphate guanylyltransferase complex composed of 4 gmppa subunits and 8 gmppb subunits; the complex is organized into three layers, a central layer made up of 2 gmppa dimers sandwiched between two layers each made up of 2 gmppb dimers.</text>
</comment>
<comment type="domain">
    <text evidence="1">The N-terminal substrate-binding domain adopts a Rossman-like fold and has a binding pocket for GTP or GDP-alpha-D-mannose.</text>
</comment>
<comment type="domain">
    <text evidence="1">The C-terminal domain consists of a series of tandem hexapeptide repeats that adopt a beta-helix conformation. The beta-helix forms several protein interaction surfaces involved in assembly of the GMPPA-GMPPB mannose-1-phosphate guanylyltransferase complex. A loop extending from the C-terminal domain (C-loop) is involved in interaction with other subunits of the GMPPA-GMPPB complex and may be involved in allosteric inhibition of gmppb catalytic activity by gmppa.</text>
</comment>
<comment type="disruption phenotype">
    <text evidence="2">Morpholino knockdown of both gmppaa and gmppab results in muscle damage and shortened motor neurons.</text>
</comment>
<comment type="similarity">
    <text evidence="3">Belongs to the transferase hexapeptide repeat family.</text>
</comment>
<proteinExistence type="evidence at transcript level"/>
<gene>
    <name type="primary">gmppaa</name>
    <name type="ORF">zgc:91853</name>
</gene>
<name>GMPAA_DANRE</name>
<keyword id="KW-0342">GTP-binding</keyword>
<keyword id="KW-0547">Nucleotide-binding</keyword>
<keyword id="KW-0548">Nucleotidyltransferase</keyword>
<keyword id="KW-1185">Reference proteome</keyword>
<keyword id="KW-0808">Transferase</keyword>
<reference key="1">
    <citation type="submission" date="2004-06" db="EMBL/GenBank/DDBJ databases">
        <authorList>
            <consortium name="NIH - Zebrafish Gene Collection (ZGC) project"/>
        </authorList>
    </citation>
    <scope>NUCLEOTIDE SEQUENCE [LARGE SCALE MRNA]</scope>
</reference>
<reference key="2">
    <citation type="journal article" date="2021" name="Nat. Struct. Mol. Biol.">
        <title>Cryo-EM structures of human GMPPA-GMPPB complex reveal how cells maintain GDP-mannose homeostasis.</title>
        <authorList>
            <person name="Zheng L."/>
            <person name="Liu Z."/>
            <person name="Wang Y."/>
            <person name="Yang F."/>
            <person name="Wang J."/>
            <person name="Huang W."/>
            <person name="Qin J."/>
            <person name="Tian M."/>
            <person name="Cai X."/>
            <person name="Liu X."/>
            <person name="Mo X."/>
            <person name="Gao N."/>
            <person name="Jia D."/>
        </authorList>
    </citation>
    <scope>DISRUPTION PHENOTYPE</scope>
</reference>
<protein>
    <recommendedName>
        <fullName evidence="3">Mannose-1-phosphate guanylyltransferase regulatory subunit alpha-A</fullName>
    </recommendedName>
    <alternativeName>
        <fullName>GDP-mannose pyrophosphorylase A-A</fullName>
    </alternativeName>
    <alternativeName>
        <fullName>GTP-mannose-1-phosphate guanylyltransferase subunit alpha-A</fullName>
    </alternativeName>
</protein>
<organism>
    <name type="scientific">Danio rerio</name>
    <name type="common">Zebrafish</name>
    <name type="synonym">Brachydanio rerio</name>
    <dbReference type="NCBI Taxonomy" id="7955"/>
    <lineage>
        <taxon>Eukaryota</taxon>
        <taxon>Metazoa</taxon>
        <taxon>Chordata</taxon>
        <taxon>Craniata</taxon>
        <taxon>Vertebrata</taxon>
        <taxon>Euteleostomi</taxon>
        <taxon>Actinopterygii</taxon>
        <taxon>Neopterygii</taxon>
        <taxon>Teleostei</taxon>
        <taxon>Ostariophysi</taxon>
        <taxon>Cypriniformes</taxon>
        <taxon>Danionidae</taxon>
        <taxon>Danioninae</taxon>
        <taxon>Danio</taxon>
    </lineage>
</organism>
<feature type="chain" id="PRO_0000327876" description="Mannose-1-phosphate guanylyltransferase regulatory subunit alpha-A">
    <location>
        <begin position="1"/>
        <end position="422"/>
    </location>
</feature>
<feature type="region of interest" description="Substrate-binding domain" evidence="1">
    <location>
        <begin position="2"/>
        <end position="253"/>
    </location>
</feature>
<feature type="region of interest" description="Hexapeptide repeat domain" evidence="1">
    <location>
        <begin position="275"/>
        <end position="422"/>
    </location>
</feature>
<feature type="region of interest" description="C-loop" evidence="1">
    <location>
        <begin position="358"/>
        <end position="386"/>
    </location>
</feature>
<feature type="binding site" evidence="1">
    <location>
        <position position="85"/>
    </location>
    <ligand>
        <name>GDP-alpha-D-mannose</name>
        <dbReference type="ChEBI" id="CHEBI:57527"/>
    </ligand>
</feature>
<feature type="binding site" evidence="1">
    <location>
        <position position="249"/>
    </location>
    <ligand>
        <name>GDP-alpha-D-mannose</name>
        <dbReference type="ChEBI" id="CHEBI:57527"/>
    </ligand>
</feature>
<dbReference type="EMBL" id="BC074036">
    <property type="protein sequence ID" value="AAH74036.1"/>
    <property type="molecule type" value="mRNA"/>
</dbReference>
<dbReference type="RefSeq" id="NP_001002196.1">
    <property type="nucleotide sequence ID" value="NM_001002196.1"/>
</dbReference>
<dbReference type="SMR" id="Q6GMK8"/>
<dbReference type="FunCoup" id="Q6GMK8">
    <property type="interactions" value="582"/>
</dbReference>
<dbReference type="STRING" id="7955.ENSDARP00000017348"/>
<dbReference type="PaxDb" id="7955-ENSDARP00000017348"/>
<dbReference type="Ensembl" id="ENSDART00000178966">
    <property type="protein sequence ID" value="ENSDARP00000143324"/>
    <property type="gene ID" value="ENSDARG00000024112"/>
</dbReference>
<dbReference type="GeneID" id="431743"/>
<dbReference type="KEGG" id="dre:431743"/>
<dbReference type="AGR" id="ZFIN:ZDB-GENE-040704-37"/>
<dbReference type="CTD" id="431743"/>
<dbReference type="ZFIN" id="ZDB-GENE-040704-37">
    <property type="gene designation" value="gmppaa"/>
</dbReference>
<dbReference type="eggNOG" id="KOG1460">
    <property type="taxonomic scope" value="Eukaryota"/>
</dbReference>
<dbReference type="HOGENOM" id="CLU_029499_3_0_1"/>
<dbReference type="InParanoid" id="Q6GMK8"/>
<dbReference type="OrthoDB" id="285674at2759"/>
<dbReference type="PhylomeDB" id="Q6GMK8"/>
<dbReference type="TreeFam" id="TF300832"/>
<dbReference type="Reactome" id="R-DRE-446205">
    <property type="pathway name" value="Synthesis of GDP-mannose"/>
</dbReference>
<dbReference type="UniPathway" id="UPA00126">
    <property type="reaction ID" value="UER00930"/>
</dbReference>
<dbReference type="PRO" id="PR:Q6GMK8"/>
<dbReference type="Proteomes" id="UP000000437">
    <property type="component" value="Chromosome 9"/>
</dbReference>
<dbReference type="Bgee" id="ENSDARG00000024112">
    <property type="expression patterns" value="Expressed in testis and 27 other cell types or tissues"/>
</dbReference>
<dbReference type="ExpressionAtlas" id="Q6GMK8">
    <property type="expression patterns" value="baseline and differential"/>
</dbReference>
<dbReference type="GO" id="GO:0005737">
    <property type="term" value="C:cytoplasm"/>
    <property type="evidence" value="ECO:0000318"/>
    <property type="project" value="GO_Central"/>
</dbReference>
<dbReference type="GO" id="GO:0005525">
    <property type="term" value="F:GTP binding"/>
    <property type="evidence" value="ECO:0007669"/>
    <property type="project" value="UniProtKB-KW"/>
</dbReference>
<dbReference type="GO" id="GO:0004475">
    <property type="term" value="F:mannose-1-phosphate guanylyltransferase (GTP) activity"/>
    <property type="evidence" value="ECO:0007669"/>
    <property type="project" value="UniProtKB-EC"/>
</dbReference>
<dbReference type="GO" id="GO:0009298">
    <property type="term" value="P:GDP-mannose biosynthetic process"/>
    <property type="evidence" value="ECO:0007669"/>
    <property type="project" value="UniProtKB-UniPathway"/>
</dbReference>
<dbReference type="CDD" id="cd06428">
    <property type="entry name" value="M1P_guanylylT_A_like_N"/>
    <property type="match status" value="1"/>
</dbReference>
<dbReference type="FunFam" id="3.90.550.10:FF:000071">
    <property type="entry name" value="Mannose-1-phosphate guanyltransferase alpha"/>
    <property type="match status" value="1"/>
</dbReference>
<dbReference type="Gene3D" id="2.160.10.10">
    <property type="entry name" value="Hexapeptide repeat proteins"/>
    <property type="match status" value="1"/>
</dbReference>
<dbReference type="Gene3D" id="3.90.550.10">
    <property type="entry name" value="Spore Coat Polysaccharide Biosynthesis Protein SpsA, Chain A"/>
    <property type="match status" value="1"/>
</dbReference>
<dbReference type="InterPro" id="IPR056729">
    <property type="entry name" value="GMPPB_C"/>
</dbReference>
<dbReference type="InterPro" id="IPR018357">
    <property type="entry name" value="Hexapep_transf_CS"/>
</dbReference>
<dbReference type="InterPro" id="IPR050486">
    <property type="entry name" value="Mannose-1P_guanyltransferase"/>
</dbReference>
<dbReference type="InterPro" id="IPR005835">
    <property type="entry name" value="NTP_transferase_dom"/>
</dbReference>
<dbReference type="InterPro" id="IPR029044">
    <property type="entry name" value="Nucleotide-diphossugar_trans"/>
</dbReference>
<dbReference type="PANTHER" id="PTHR22572">
    <property type="entry name" value="SUGAR-1-PHOSPHATE GUANYL TRANSFERASE"/>
    <property type="match status" value="1"/>
</dbReference>
<dbReference type="Pfam" id="PF25087">
    <property type="entry name" value="GMPPB_C"/>
    <property type="match status" value="1"/>
</dbReference>
<dbReference type="Pfam" id="PF00483">
    <property type="entry name" value="NTP_transferase"/>
    <property type="match status" value="1"/>
</dbReference>
<dbReference type="SUPFAM" id="SSF53448">
    <property type="entry name" value="Nucleotide-diphospho-sugar transferases"/>
    <property type="match status" value="1"/>
</dbReference>
<dbReference type="PROSITE" id="PS00101">
    <property type="entry name" value="HEXAPEP_TRANSFERASES"/>
    <property type="match status" value="1"/>
</dbReference>
<sequence length="422" mass="47011">MLKAVILIGGPQKGTRFRPLSFEVPKPLFPVAGVPMLQHHIEACSKLPNMKEILLIGFYQPNEELNRFLSCAQQDFKISIRYLQEYAALGTGGGIYHFRDQILSGGPDAFFVMNADVCSEFPLPEMLDFQKEHGDTYSFVILGTTANRKQSLNYGCIVENEQTDEVLHYVEKPGTFVSDIINCGIYLFTPEIFQHIGSVFQKNQQEMLLEEQSNGWHRAEVIRLEQDIFTALAGQGKLYVYKTDRFWSQIKSAGSAIYASRLYLNQYHKTHPERLATNTEGGAKTRGNVYIHPTANIDPTAVLGPNVSIGTGVTIGAGVRVRESIILHGATLQDHSCVLNSIVGWESTIGKWARVEGTPSDPNPNDPYAKIDSETLFRDGKLTPSITILGCNVNIPSEVIILNSIVLPHKDLNRSFKNQIIL</sequence>